<keyword id="KW-0002">3D-structure</keyword>
<keyword id="KW-0025">Alternative splicing</keyword>
<keyword id="KW-0175">Coiled coil</keyword>
<keyword id="KW-1185">Reference proteome</keyword>
<reference key="1">
    <citation type="journal article" date="1998" name="Science">
        <title>Genome sequence of the nematode C. elegans: a platform for investigating biology.</title>
        <authorList>
            <consortium name="The C. elegans sequencing consortium"/>
        </authorList>
    </citation>
    <scope>NUCLEOTIDE SEQUENCE [LARGE SCALE GENOMIC DNA]</scope>
    <source>
        <strain>Bristol N2</strain>
    </source>
</reference>
<evidence type="ECO:0000255" key="1"/>
<evidence type="ECO:0000256" key="2">
    <source>
        <dbReference type="SAM" id="MobiDB-lite"/>
    </source>
</evidence>
<evidence type="ECO:0000305" key="3"/>
<evidence type="ECO:0000312" key="4">
    <source>
        <dbReference type="WormBase" id="B0361.2a"/>
    </source>
</evidence>
<evidence type="ECO:0000312" key="5">
    <source>
        <dbReference type="WormBase" id="B0361.2b"/>
    </source>
</evidence>
<organism>
    <name type="scientific">Caenorhabditis elegans</name>
    <dbReference type="NCBI Taxonomy" id="6239"/>
    <lineage>
        <taxon>Eukaryota</taxon>
        <taxon>Metazoa</taxon>
        <taxon>Ecdysozoa</taxon>
        <taxon>Nematoda</taxon>
        <taxon>Chromadorea</taxon>
        <taxon>Rhabditida</taxon>
        <taxon>Rhabditina</taxon>
        <taxon>Rhabditomorpha</taxon>
        <taxon>Rhabditoidea</taxon>
        <taxon>Rhabditidae</taxon>
        <taxon>Peloderinae</taxon>
        <taxon>Caenorhabditis</taxon>
    </lineage>
</organism>
<comment type="alternative products">
    <event type="alternative splicing"/>
    <isoform>
        <id>Q10946-1</id>
        <name evidence="4">a</name>
        <sequence type="displayed"/>
    </isoform>
    <isoform>
        <id>Q10946-2</id>
        <name evidence="5">b</name>
        <sequence type="described" ref="VSP_062481"/>
    </isoform>
</comment>
<comment type="similarity">
    <text evidence="3">Belongs to the CWF19 family.</text>
</comment>
<sequence>MFRRPDDDDDDYSGRKVIKPKPIAEKYAKKLGSEFSTGKTFVTGSDKSQKDFYGSQQVRNDVMKSSDSGGAPLTEDEKNKLSAKILKAEMKGDTDLVKKLKRKLESGISGDDEPPKSKSKEVTMMRRDREGNILPASSRRSDSDRHGEGSSRMRREYEKSQDLDSMVREEKTGTAGDQLRLFERSLIKSSKIRRHDDESVDDIAEMQKGKKKSDEKDKKRKEKESIKEHKRIERSFDDCSRCIDSSRLKKHNIIAVGINTYLAVVEWDGLDDEHLIIVPTQHCSSTIQLDENVWDEMRLWRKGLVAVWKSQNRDCIFFEMSRHVDSNPHVFIECVPVEQEIGDMASIYFKKAINECEGEYMDNKKLIETKDLRRQIPKGFSYFAVDFGLSNGFAHVIESHDHFPSTFATEIIAGMLDLPPKKWRKRETDEMSKQKSRAENFKKLWEPVDWTKRLKNDSTK</sequence>
<dbReference type="EMBL" id="FO080185">
    <property type="protein sequence ID" value="CCD61816.1"/>
    <property type="molecule type" value="Genomic_DNA"/>
</dbReference>
<dbReference type="EMBL" id="BX284603">
    <property type="protein sequence ID" value="CCD61817.1"/>
    <property type="molecule type" value="Genomic_DNA"/>
</dbReference>
<dbReference type="PIR" id="F88504">
    <property type="entry name" value="F88504"/>
</dbReference>
<dbReference type="PIR" id="H88504">
    <property type="entry name" value="H88504"/>
</dbReference>
<dbReference type="RefSeq" id="NP_001021125.1">
    <molecule id="Q10946-1"/>
    <property type="nucleotide sequence ID" value="NM_001025954.7"/>
</dbReference>
<dbReference type="RefSeq" id="NP_001021126.1">
    <molecule id="Q10946-2"/>
    <property type="nucleotide sequence ID" value="NM_001025955.5"/>
</dbReference>
<dbReference type="PDB" id="8RO1">
    <property type="method" value="EM"/>
    <property type="resolution" value="3.00 A"/>
    <property type="chains" value="L2=1-460"/>
</dbReference>
<dbReference type="PDBsum" id="8RO1"/>
<dbReference type="EMDB" id="EMD-19398"/>
<dbReference type="SMR" id="Q10946"/>
<dbReference type="BioGRID" id="41245">
    <property type="interactions" value="1"/>
</dbReference>
<dbReference type="FunCoup" id="Q10946">
    <property type="interactions" value="2101"/>
</dbReference>
<dbReference type="STRING" id="6239.B0361.2a.1"/>
<dbReference type="PaxDb" id="6239-B0361.2a"/>
<dbReference type="PeptideAtlas" id="Q10946"/>
<dbReference type="EnsemblMetazoa" id="B0361.2a.1">
    <molecule id="Q10946-1"/>
    <property type="protein sequence ID" value="B0361.2a.1"/>
    <property type="gene ID" value="WBGene00015156"/>
</dbReference>
<dbReference type="EnsemblMetazoa" id="B0361.2b.1">
    <molecule id="Q10946-2"/>
    <property type="protein sequence ID" value="B0361.2b.1"/>
    <property type="gene ID" value="WBGene00015156"/>
</dbReference>
<dbReference type="GeneID" id="176034"/>
<dbReference type="KEGG" id="cel:CELE_B0361.2"/>
<dbReference type="UCSC" id="B0361.2a">
    <property type="organism name" value="c. elegans"/>
</dbReference>
<dbReference type="AGR" id="WB:WBGene00015156"/>
<dbReference type="CTD" id="176034"/>
<dbReference type="WormBase" id="B0361.2a">
    <property type="protein sequence ID" value="CE33549"/>
    <property type="gene ID" value="WBGene00015156"/>
    <property type="gene designation" value="cwf-19L2"/>
</dbReference>
<dbReference type="WormBase" id="B0361.2b">
    <property type="protein sequence ID" value="CE38480"/>
    <property type="gene ID" value="WBGene00015156"/>
    <property type="gene designation" value="cwf-19L2"/>
</dbReference>
<dbReference type="eggNOG" id="KOG2477">
    <property type="taxonomic scope" value="Eukaryota"/>
</dbReference>
<dbReference type="GeneTree" id="ENSGT00940000155627"/>
<dbReference type="HOGENOM" id="CLU_015540_3_1_1"/>
<dbReference type="InParanoid" id="Q10946"/>
<dbReference type="OMA" id="PWHVGLQ"/>
<dbReference type="OrthoDB" id="2113965at2759"/>
<dbReference type="PhylomeDB" id="Q10946"/>
<dbReference type="PRO" id="PR:Q10946"/>
<dbReference type="Proteomes" id="UP000001940">
    <property type="component" value="Chromosome III"/>
</dbReference>
<dbReference type="Bgee" id="WBGene00015156">
    <property type="expression patterns" value="Expressed in germ line (C elegans) and 4 other cell types or tissues"/>
</dbReference>
<dbReference type="ExpressionAtlas" id="Q10946">
    <property type="expression patterns" value="baseline and differential"/>
</dbReference>
<dbReference type="GO" id="GO:0071014">
    <property type="term" value="C:post-mRNA release spliceosomal complex"/>
    <property type="evidence" value="ECO:0000318"/>
    <property type="project" value="GO_Central"/>
</dbReference>
<dbReference type="GO" id="GO:0000398">
    <property type="term" value="P:mRNA splicing, via spliceosome"/>
    <property type="evidence" value="ECO:0000318"/>
    <property type="project" value="GO_Central"/>
</dbReference>
<dbReference type="InterPro" id="IPR040194">
    <property type="entry name" value="Cwf19-like"/>
</dbReference>
<dbReference type="InterPro" id="IPR006768">
    <property type="entry name" value="Cwf19-like_C_dom-1"/>
</dbReference>
<dbReference type="InterPro" id="IPR006767">
    <property type="entry name" value="Cwf19-like_C_dom-2"/>
</dbReference>
<dbReference type="PANTHER" id="PTHR12072">
    <property type="entry name" value="CWF19, CELL CYCLE CONTROL PROTEIN"/>
    <property type="match status" value="1"/>
</dbReference>
<dbReference type="PANTHER" id="PTHR12072:SF5">
    <property type="entry name" value="CWF19-LIKE PROTEIN 2"/>
    <property type="match status" value="1"/>
</dbReference>
<dbReference type="Pfam" id="PF04677">
    <property type="entry name" value="CwfJ_C_1"/>
    <property type="match status" value="1"/>
</dbReference>
<dbReference type="Pfam" id="PF04676">
    <property type="entry name" value="CwfJ_C_2"/>
    <property type="match status" value="1"/>
</dbReference>
<proteinExistence type="evidence at protein level"/>
<name>C19L2_CAEEL</name>
<gene>
    <name evidence="4" type="primary">cwf-19L2</name>
    <name evidence="4" type="ORF">B0361.2</name>
</gene>
<accession>Q10946</accession>
<accession>Q10945</accession>
<accession>Q4TTD1</accession>
<protein>
    <recommendedName>
        <fullName>CWF19-like protein 2 homolog</fullName>
    </recommendedName>
</protein>
<feature type="chain" id="PRO_0000065074" description="CWF19-like protein 2 homolog">
    <location>
        <begin position="1"/>
        <end position="460"/>
    </location>
</feature>
<feature type="region of interest" description="Disordered" evidence="2">
    <location>
        <begin position="38"/>
        <end position="78"/>
    </location>
</feature>
<feature type="region of interest" description="Disordered" evidence="2">
    <location>
        <begin position="103"/>
        <end position="175"/>
    </location>
</feature>
<feature type="region of interest" description="Disordered" evidence="2">
    <location>
        <begin position="193"/>
        <end position="227"/>
    </location>
</feature>
<feature type="coiled-coil region" evidence="1">
    <location>
        <begin position="84"/>
        <end position="106"/>
    </location>
</feature>
<feature type="coiled-coil region" evidence="1">
    <location>
        <begin position="210"/>
        <end position="231"/>
    </location>
</feature>
<feature type="compositionally biased region" description="Polar residues" evidence="2">
    <location>
        <begin position="54"/>
        <end position="68"/>
    </location>
</feature>
<feature type="compositionally biased region" description="Basic and acidic residues" evidence="2">
    <location>
        <begin position="113"/>
        <end position="131"/>
    </location>
</feature>
<feature type="compositionally biased region" description="Basic and acidic residues" evidence="2">
    <location>
        <begin position="139"/>
        <end position="172"/>
    </location>
</feature>
<feature type="compositionally biased region" description="Basic and acidic residues" evidence="2">
    <location>
        <begin position="205"/>
        <end position="227"/>
    </location>
</feature>
<feature type="splice variant" id="VSP_062481" description="In isoform b." evidence="3">
    <location>
        <begin position="1"/>
        <end position="360"/>
    </location>
</feature>